<proteinExistence type="evidence at protein level"/>
<protein>
    <recommendedName>
        <fullName evidence="4">Dehydrodolichyl diphosphate synthase CPT3</fullName>
        <ecNumber evidence="5">2.5.1.87</ecNumber>
    </recommendedName>
    <alternativeName>
        <fullName evidence="3">Cis-prenyltransferase 3</fullName>
        <shortName evidence="3">SlCPT3</shortName>
    </alternativeName>
</protein>
<evidence type="ECO:0000250" key="1">
    <source>
        <dbReference type="UniProtKB" id="P60472"/>
    </source>
</evidence>
<evidence type="ECO:0000269" key="2">
    <source>
    </source>
</evidence>
<evidence type="ECO:0000303" key="3">
    <source>
    </source>
</evidence>
<evidence type="ECO:0000305" key="4"/>
<evidence type="ECO:0000305" key="5">
    <source>
    </source>
</evidence>
<feature type="chain" id="PRO_0000450934" description="Dehydrodolichyl diphosphate synthase CPT3">
    <location>
        <begin position="1"/>
        <end position="290"/>
    </location>
</feature>
<feature type="active site" evidence="1">
    <location>
        <position position="42"/>
    </location>
</feature>
<sequence length="290" mass="33271">MEGVNGKKVGHLCENISSFVRQCIFSILSVGPVPSHIAFIMDGNRRYSKKQNLLDGNGHRAGFSALINMLKYCYELGVKYITVYAFSIDNFKRRPEEVVSLMKLMQEKIDELTKEESIVNRLGIRIYFQGNLKLLSDHVRLAAERAMVKTSGNSKAILSICVAYTSTDEIVHAVQESCEEKWDEIRKLDVNNDGSNLIRLEENVKDKNEHRIGVTNVDRHMYMSVCPDPDIIIRTSGATRLSNFLLWQSSHCLLYSPAALWPEIGLRHLIWVILDFQRNYLYLKEKKKQS</sequence>
<name>CPT3_SOLLC</name>
<organism>
    <name type="scientific">Solanum lycopersicum</name>
    <name type="common">Tomato</name>
    <name type="synonym">Lycopersicon esculentum</name>
    <dbReference type="NCBI Taxonomy" id="4081"/>
    <lineage>
        <taxon>Eukaryota</taxon>
        <taxon>Viridiplantae</taxon>
        <taxon>Streptophyta</taxon>
        <taxon>Embryophyta</taxon>
        <taxon>Tracheophyta</taxon>
        <taxon>Spermatophyta</taxon>
        <taxon>Magnoliopsida</taxon>
        <taxon>eudicotyledons</taxon>
        <taxon>Gunneridae</taxon>
        <taxon>Pentapetalae</taxon>
        <taxon>asterids</taxon>
        <taxon>lamiids</taxon>
        <taxon>Solanales</taxon>
        <taxon>Solanaceae</taxon>
        <taxon>Solanoideae</taxon>
        <taxon>Solaneae</taxon>
        <taxon>Solanum</taxon>
        <taxon>Solanum subgen. Lycopersicon</taxon>
    </lineage>
</organism>
<reference key="1">
    <citation type="journal article" date="2013" name="Plant J.">
        <title>The tomato cis-prenyltransferase gene family.</title>
        <authorList>
            <person name="Akhtar T.A."/>
            <person name="Matsuba Y."/>
            <person name="Schauvinhold I."/>
            <person name="Yu G."/>
            <person name="Lees H.A."/>
            <person name="Klein S.E."/>
            <person name="Pichersky E."/>
        </authorList>
    </citation>
    <scope>NUCLEOTIDE SEQUENCE [GENOMIC DNA]</scope>
    <scope>FUNCTION</scope>
    <scope>CATALYTIC ACTIVITY</scope>
    <scope>COFACTOR</scope>
    <scope>SUBCELLULAR LOCATION</scope>
    <scope>TISSUE SPECIFICITY</scope>
</reference>
<reference key="2">
    <citation type="journal article" date="2012" name="Nature">
        <title>The tomato genome sequence provides insights into fleshy fruit evolution.</title>
        <authorList>
            <consortium name="Tomato Genome Consortium"/>
        </authorList>
    </citation>
    <scope>NUCLEOTIDE SEQUENCE [LARGE SCALE GENOMIC DNA]</scope>
    <source>
        <strain>cv. Heinz 1706</strain>
    </source>
</reference>
<keyword id="KW-0963">Cytoplasm</keyword>
<keyword id="KW-0460">Magnesium</keyword>
<keyword id="KW-0479">Metal-binding</keyword>
<keyword id="KW-1185">Reference proteome</keyword>
<keyword id="KW-0808">Transferase</keyword>
<comment type="function">
    <text evidence="5">Catalyzes cis-prenyl chain elongation to produce the polyprenyl backbone of dolichol, a glycosyl carrier-lipid required for the biosynthesis of several classes of glycoprotein.</text>
</comment>
<comment type="catalytic activity">
    <reaction evidence="5">
        <text>n isopentenyl diphosphate + (2E,6E)-farnesyl diphosphate = a di-trans,poly-cis-polyprenyl diphosphate + n diphosphate</text>
        <dbReference type="Rhea" id="RHEA:53008"/>
        <dbReference type="Rhea" id="RHEA-COMP:19494"/>
        <dbReference type="ChEBI" id="CHEBI:33019"/>
        <dbReference type="ChEBI" id="CHEBI:128769"/>
        <dbReference type="ChEBI" id="CHEBI:136960"/>
        <dbReference type="ChEBI" id="CHEBI:175763"/>
        <dbReference type="EC" id="2.5.1.87"/>
    </reaction>
    <physiologicalReaction direction="left-to-right" evidence="5">
        <dbReference type="Rhea" id="RHEA:53009"/>
    </physiologicalReaction>
</comment>
<comment type="cofactor">
    <cofactor evidence="2">
        <name>Mg(2+)</name>
        <dbReference type="ChEBI" id="CHEBI:18420"/>
    </cofactor>
</comment>
<comment type="subcellular location">
    <subcellularLocation>
        <location evidence="2">Cytoplasm</location>
        <location evidence="2">Cytosol</location>
    </subcellularLocation>
</comment>
<comment type="tissue specificity">
    <text evidence="2">Expressed in leaf trichomes and stem trichomes (PubMed:23134568). Expressed at low levels in young leaves, stems and old leaves (PubMed:23134568).</text>
</comment>
<comment type="similarity">
    <text evidence="4">Belongs to the UPP synthase family.</text>
</comment>
<accession>K7WCI9</accession>
<gene>
    <name evidence="3" type="primary">CPT3</name>
    <name evidence="4" type="ordered locus">Solyc03g025560</name>
</gene>
<dbReference type="EC" id="2.5.1.87" evidence="5"/>
<dbReference type="EMBL" id="JX943885">
    <property type="protein sequence ID" value="AFW98427.1"/>
    <property type="molecule type" value="Genomic_DNA"/>
</dbReference>
<dbReference type="EMBL" id="CM001066">
    <property type="status" value="NOT_ANNOTATED_CDS"/>
    <property type="molecule type" value="Genomic_DNA"/>
</dbReference>
<dbReference type="RefSeq" id="NP_001307121.1">
    <property type="nucleotide sequence ID" value="NM_001320192.2"/>
</dbReference>
<dbReference type="SMR" id="K7WCI9"/>
<dbReference type="FunCoup" id="K7WCI9">
    <property type="interactions" value="3122"/>
</dbReference>
<dbReference type="STRING" id="4081.K7WCI9"/>
<dbReference type="PaxDb" id="4081-Solyc03g025560.2.1"/>
<dbReference type="EnsemblPlants" id="Solyc03g025560.3.1">
    <property type="protein sequence ID" value="Solyc03g025560.3.1.1"/>
    <property type="gene ID" value="Solyc03g025560.3"/>
</dbReference>
<dbReference type="GeneID" id="101253666"/>
<dbReference type="Gramene" id="Solyc03g025560.3.1">
    <property type="protein sequence ID" value="Solyc03g025560.3.1.1"/>
    <property type="gene ID" value="Solyc03g025560.3"/>
</dbReference>
<dbReference type="KEGG" id="sly:101253666"/>
<dbReference type="InParanoid" id="K7WCI9"/>
<dbReference type="OMA" id="YWPAFRE"/>
<dbReference type="OrthoDB" id="4173905at2759"/>
<dbReference type="BRENDA" id="2.5.1.87">
    <property type="organism ID" value="3101"/>
</dbReference>
<dbReference type="Proteomes" id="UP000004994">
    <property type="component" value="Chromosome 3"/>
</dbReference>
<dbReference type="ExpressionAtlas" id="K7WCI9">
    <property type="expression patterns" value="baseline"/>
</dbReference>
<dbReference type="GO" id="GO:0005829">
    <property type="term" value="C:cytosol"/>
    <property type="evidence" value="ECO:0000314"/>
    <property type="project" value="UniProtKB"/>
</dbReference>
<dbReference type="GO" id="GO:0005783">
    <property type="term" value="C:endoplasmic reticulum"/>
    <property type="evidence" value="ECO:0000318"/>
    <property type="project" value="GO_Central"/>
</dbReference>
<dbReference type="GO" id="GO:0045547">
    <property type="term" value="F:ditrans,polycis-polyprenyl diphosphate synthase [(2E,6E)-farnesyl diphosphate specific] activity"/>
    <property type="evidence" value="ECO:0007669"/>
    <property type="project" value="UniProtKB-EC"/>
</dbReference>
<dbReference type="GO" id="GO:0000287">
    <property type="term" value="F:magnesium ion binding"/>
    <property type="evidence" value="ECO:0000314"/>
    <property type="project" value="UniProtKB"/>
</dbReference>
<dbReference type="GO" id="GO:0004659">
    <property type="term" value="F:prenyltransferase activity"/>
    <property type="evidence" value="ECO:0000314"/>
    <property type="project" value="UniProtKB"/>
</dbReference>
<dbReference type="GO" id="GO:0016094">
    <property type="term" value="P:polyprenol biosynthetic process"/>
    <property type="evidence" value="ECO:0000318"/>
    <property type="project" value="GO_Central"/>
</dbReference>
<dbReference type="CDD" id="cd00475">
    <property type="entry name" value="Cis_IPPS"/>
    <property type="match status" value="1"/>
</dbReference>
<dbReference type="Gene3D" id="3.40.1180.10">
    <property type="entry name" value="Decaprenyl diphosphate synthase-like"/>
    <property type="match status" value="1"/>
</dbReference>
<dbReference type="HAMAP" id="MF_01139">
    <property type="entry name" value="ISPT"/>
    <property type="match status" value="1"/>
</dbReference>
<dbReference type="InterPro" id="IPR001441">
    <property type="entry name" value="UPP_synth-like"/>
</dbReference>
<dbReference type="InterPro" id="IPR018520">
    <property type="entry name" value="UPP_synth-like_CS"/>
</dbReference>
<dbReference type="InterPro" id="IPR036424">
    <property type="entry name" value="UPP_synth-like_sf"/>
</dbReference>
<dbReference type="NCBIfam" id="TIGR00055">
    <property type="entry name" value="uppS"/>
    <property type="match status" value="1"/>
</dbReference>
<dbReference type="PANTHER" id="PTHR10291:SF18">
    <property type="entry name" value="DEHYDRODOLICHYL DIPHOSPHATE SYNTHASE CPT3"/>
    <property type="match status" value="1"/>
</dbReference>
<dbReference type="PANTHER" id="PTHR10291">
    <property type="entry name" value="DEHYDRODOLICHYL DIPHOSPHATE SYNTHASE FAMILY MEMBER"/>
    <property type="match status" value="1"/>
</dbReference>
<dbReference type="Pfam" id="PF01255">
    <property type="entry name" value="Prenyltransf"/>
    <property type="match status" value="1"/>
</dbReference>
<dbReference type="SUPFAM" id="SSF64005">
    <property type="entry name" value="Undecaprenyl diphosphate synthase"/>
    <property type="match status" value="1"/>
</dbReference>
<dbReference type="PROSITE" id="PS01066">
    <property type="entry name" value="UPP_SYNTHASE"/>
    <property type="match status" value="1"/>
</dbReference>